<comment type="catalytic activity">
    <reaction evidence="1">
        <text>tRNA(Phe) + L-phenylalanine + ATP = L-phenylalanyl-tRNA(Phe) + AMP + diphosphate + H(+)</text>
        <dbReference type="Rhea" id="RHEA:19413"/>
        <dbReference type="Rhea" id="RHEA-COMP:9668"/>
        <dbReference type="Rhea" id="RHEA-COMP:9699"/>
        <dbReference type="ChEBI" id="CHEBI:15378"/>
        <dbReference type="ChEBI" id="CHEBI:30616"/>
        <dbReference type="ChEBI" id="CHEBI:33019"/>
        <dbReference type="ChEBI" id="CHEBI:58095"/>
        <dbReference type="ChEBI" id="CHEBI:78442"/>
        <dbReference type="ChEBI" id="CHEBI:78531"/>
        <dbReference type="ChEBI" id="CHEBI:456215"/>
        <dbReference type="EC" id="6.1.1.20"/>
    </reaction>
</comment>
<comment type="cofactor">
    <cofactor evidence="1">
        <name>Mg(2+)</name>
        <dbReference type="ChEBI" id="CHEBI:18420"/>
    </cofactor>
    <text evidence="1">Binds 2 magnesium ions per tetramer.</text>
</comment>
<comment type="subunit">
    <text evidence="1">Tetramer of two alpha and two beta subunits.</text>
</comment>
<comment type="subcellular location">
    <subcellularLocation>
        <location evidence="1">Cytoplasm</location>
    </subcellularLocation>
</comment>
<comment type="similarity">
    <text evidence="1">Belongs to the class-II aminoacyl-tRNA synthetase family. Phe-tRNA synthetase alpha subunit type 2 subfamily.</text>
</comment>
<organism>
    <name type="scientific">Halobacterium salinarum (strain ATCC 29341 / DSM 671 / R1)</name>
    <dbReference type="NCBI Taxonomy" id="478009"/>
    <lineage>
        <taxon>Archaea</taxon>
        <taxon>Methanobacteriati</taxon>
        <taxon>Methanobacteriota</taxon>
        <taxon>Stenosarchaea group</taxon>
        <taxon>Halobacteria</taxon>
        <taxon>Halobacteriales</taxon>
        <taxon>Halobacteriaceae</taxon>
        <taxon>Halobacterium</taxon>
        <taxon>Halobacterium salinarum NRC-34001</taxon>
    </lineage>
</organism>
<accession>B0R806</accession>
<gene>
    <name evidence="1" type="primary">pheS</name>
    <name type="ordered locus">OE_4505F</name>
</gene>
<proteinExistence type="inferred from homology"/>
<keyword id="KW-0030">Aminoacyl-tRNA synthetase</keyword>
<keyword id="KW-0067">ATP-binding</keyword>
<keyword id="KW-0963">Cytoplasm</keyword>
<keyword id="KW-0436">Ligase</keyword>
<keyword id="KW-0460">Magnesium</keyword>
<keyword id="KW-0479">Metal-binding</keyword>
<keyword id="KW-0547">Nucleotide-binding</keyword>
<keyword id="KW-0648">Protein biosynthesis</keyword>
<dbReference type="EC" id="6.1.1.20" evidence="1"/>
<dbReference type="EMBL" id="AM774415">
    <property type="protein sequence ID" value="CAP14875.1"/>
    <property type="molecule type" value="Genomic_DNA"/>
</dbReference>
<dbReference type="RefSeq" id="WP_010903869.1">
    <property type="nucleotide sequence ID" value="NC_010364.1"/>
</dbReference>
<dbReference type="SMR" id="B0R806"/>
<dbReference type="EnsemblBacteria" id="CAP14875">
    <property type="protein sequence ID" value="CAP14875"/>
    <property type="gene ID" value="OE_4505F"/>
</dbReference>
<dbReference type="KEGG" id="hsl:OE_4505F"/>
<dbReference type="HOGENOM" id="CLU_025086_2_2_2"/>
<dbReference type="PhylomeDB" id="B0R806"/>
<dbReference type="Proteomes" id="UP000001321">
    <property type="component" value="Chromosome"/>
</dbReference>
<dbReference type="GO" id="GO:0005737">
    <property type="term" value="C:cytoplasm"/>
    <property type="evidence" value="ECO:0007669"/>
    <property type="project" value="UniProtKB-SubCell"/>
</dbReference>
<dbReference type="GO" id="GO:0005524">
    <property type="term" value="F:ATP binding"/>
    <property type="evidence" value="ECO:0007669"/>
    <property type="project" value="UniProtKB-UniRule"/>
</dbReference>
<dbReference type="GO" id="GO:0000287">
    <property type="term" value="F:magnesium ion binding"/>
    <property type="evidence" value="ECO:0007669"/>
    <property type="project" value="UniProtKB-UniRule"/>
</dbReference>
<dbReference type="GO" id="GO:0004826">
    <property type="term" value="F:phenylalanine-tRNA ligase activity"/>
    <property type="evidence" value="ECO:0007669"/>
    <property type="project" value="UniProtKB-UniRule"/>
</dbReference>
<dbReference type="GO" id="GO:0000049">
    <property type="term" value="F:tRNA binding"/>
    <property type="evidence" value="ECO:0007669"/>
    <property type="project" value="InterPro"/>
</dbReference>
<dbReference type="GO" id="GO:0006432">
    <property type="term" value="P:phenylalanyl-tRNA aminoacylation"/>
    <property type="evidence" value="ECO:0007669"/>
    <property type="project" value="UniProtKB-UniRule"/>
</dbReference>
<dbReference type="CDD" id="cd00496">
    <property type="entry name" value="PheRS_alpha_core"/>
    <property type="match status" value="1"/>
</dbReference>
<dbReference type="FunFam" id="3.30.930.10:FF:000233">
    <property type="entry name" value="Phenylalanine--tRNA ligase alpha subunit"/>
    <property type="match status" value="1"/>
</dbReference>
<dbReference type="Gene3D" id="3.30.930.10">
    <property type="entry name" value="Bira Bifunctional Protein, Domain 2"/>
    <property type="match status" value="1"/>
</dbReference>
<dbReference type="Gene3D" id="1.10.10.10">
    <property type="entry name" value="Winged helix-like DNA-binding domain superfamily/Winged helix DNA-binding domain"/>
    <property type="match status" value="1"/>
</dbReference>
<dbReference type="HAMAP" id="MF_00282">
    <property type="entry name" value="Phe_tRNA_synth_alpha2"/>
    <property type="match status" value="1"/>
</dbReference>
<dbReference type="InterPro" id="IPR006195">
    <property type="entry name" value="aa-tRNA-synth_II"/>
</dbReference>
<dbReference type="InterPro" id="IPR045864">
    <property type="entry name" value="aa-tRNA-synth_II/BPL/LPL"/>
</dbReference>
<dbReference type="InterPro" id="IPR004529">
    <property type="entry name" value="Phe-tRNA-synth_IIc_asu"/>
</dbReference>
<dbReference type="InterPro" id="IPR022917">
    <property type="entry name" value="Phe_tRNA_ligase_alpha_bac/arc"/>
</dbReference>
<dbReference type="InterPro" id="IPR002319">
    <property type="entry name" value="Phenylalanyl-tRNA_Synthase"/>
</dbReference>
<dbReference type="InterPro" id="IPR036388">
    <property type="entry name" value="WH-like_DNA-bd_sf"/>
</dbReference>
<dbReference type="NCBIfam" id="TIGR00468">
    <property type="entry name" value="pheS"/>
    <property type="match status" value="1"/>
</dbReference>
<dbReference type="NCBIfam" id="NF003210">
    <property type="entry name" value="PRK04172.1"/>
    <property type="match status" value="1"/>
</dbReference>
<dbReference type="PANTHER" id="PTHR11538:SF40">
    <property type="entry name" value="PHENYLALANINE--TRNA LIGASE ALPHA SUBUNIT"/>
    <property type="match status" value="1"/>
</dbReference>
<dbReference type="PANTHER" id="PTHR11538">
    <property type="entry name" value="PHENYLALANYL-TRNA SYNTHETASE"/>
    <property type="match status" value="1"/>
</dbReference>
<dbReference type="Pfam" id="PF01409">
    <property type="entry name" value="tRNA-synt_2d"/>
    <property type="match status" value="1"/>
</dbReference>
<dbReference type="SUPFAM" id="SSF55681">
    <property type="entry name" value="Class II aaRS and biotin synthetases"/>
    <property type="match status" value="1"/>
</dbReference>
<dbReference type="PROSITE" id="PS50862">
    <property type="entry name" value="AA_TRNA_LIGASE_II"/>
    <property type="match status" value="1"/>
</dbReference>
<evidence type="ECO:0000255" key="1">
    <source>
        <dbReference type="HAMAP-Rule" id="MF_00282"/>
    </source>
</evidence>
<name>SYFA_HALS3</name>
<feature type="chain" id="PRO_1000114935" description="Phenylalanine--tRNA ligase alpha subunit">
    <location>
        <begin position="1"/>
        <end position="502"/>
    </location>
</feature>
<feature type="binding site" evidence="1">
    <location>
        <position position="339"/>
    </location>
    <ligand>
        <name>L-phenylalanine</name>
        <dbReference type="ChEBI" id="CHEBI:58095"/>
    </ligand>
</feature>
<feature type="binding site" evidence="1">
    <location>
        <begin position="382"/>
        <end position="384"/>
    </location>
    <ligand>
        <name>L-phenylalanine</name>
        <dbReference type="ChEBI" id="CHEBI:58095"/>
    </ligand>
</feature>
<feature type="binding site" evidence="1">
    <location>
        <position position="422"/>
    </location>
    <ligand>
        <name>L-phenylalanine</name>
        <dbReference type="ChEBI" id="CHEBI:58095"/>
    </ligand>
</feature>
<feature type="binding site" evidence="1">
    <location>
        <position position="424"/>
    </location>
    <ligand>
        <name>Mg(2+)</name>
        <dbReference type="ChEBI" id="CHEBI:18420"/>
        <note>shared with beta subunit</note>
    </ligand>
</feature>
<feature type="binding site" evidence="1">
    <location>
        <position position="448"/>
    </location>
    <ligand>
        <name>L-phenylalanine</name>
        <dbReference type="ChEBI" id="CHEBI:58095"/>
    </ligand>
</feature>
<reference key="1">
    <citation type="journal article" date="2008" name="Genomics">
        <title>Evolution in the laboratory: the genome of Halobacterium salinarum strain R1 compared to that of strain NRC-1.</title>
        <authorList>
            <person name="Pfeiffer F."/>
            <person name="Schuster S.C."/>
            <person name="Broicher A."/>
            <person name="Falb M."/>
            <person name="Palm P."/>
            <person name="Rodewald K."/>
            <person name="Ruepp A."/>
            <person name="Soppa J."/>
            <person name="Tittor J."/>
            <person name="Oesterhelt D."/>
        </authorList>
    </citation>
    <scope>NUCLEOTIDE SEQUENCE [LARGE SCALE GENOMIC DNA]</scope>
    <source>
        <strain>ATCC 29341 / DSM 671 / R1</strain>
    </source>
</reference>
<sequence length="502" mass="54332">MQLPTQQVAVLDAASTDDPQRIEALAADTDYPPETIAGAALALEAEGLVAVTETTTTTVSLTDEGHAYATDGLPEVRLYRAALDAGADDAPVEMGSVIGAAGLDGPQVDIALSNYARKGYGTIDSGALAADPDADPENDPEADALATLTDGDSVDDDAVVDQLASRDLVTVSERTVRSVTLTEAGVTELMAGVEATDEVGELTPELLASGEWADVEFADYNVAADAADHTPGKTHVLRQAAERVTDVLVGMGFQEMAGPHVDADFYINDCLFMPQDHPARNHWDRFALSNPARIDELPDALVERVERAHREGAGDDGDGYHSPWDEDFARALALRGHTTSLTARHLAGLADADVEAPARYFSVEKAYRNDTLDATHLLEFFQIEGWVLADDLSVRDLMGTFREFYSQFGIHDLQFKPTYNPYTEPSFELFGRHPETGELIEIGNSGIFRPEMLDPLDVDGDVMAWGLALERLLMLMTGFEDIRDVHGTLCDVGFLRNAEVVY</sequence>
<protein>
    <recommendedName>
        <fullName evidence="1">Phenylalanine--tRNA ligase alpha subunit</fullName>
        <ecNumber evidence="1">6.1.1.20</ecNumber>
    </recommendedName>
    <alternativeName>
        <fullName evidence="1">Phenylalanyl-tRNA synthetase alpha subunit</fullName>
        <shortName evidence="1">PheRS</shortName>
    </alternativeName>
</protein>